<name>PYRF_HAEIN</name>
<accession>P43812</accession>
<organism>
    <name type="scientific">Haemophilus influenzae (strain ATCC 51907 / DSM 11121 / KW20 / Rd)</name>
    <dbReference type="NCBI Taxonomy" id="71421"/>
    <lineage>
        <taxon>Bacteria</taxon>
        <taxon>Pseudomonadati</taxon>
        <taxon>Pseudomonadota</taxon>
        <taxon>Gammaproteobacteria</taxon>
        <taxon>Pasteurellales</taxon>
        <taxon>Pasteurellaceae</taxon>
        <taxon>Haemophilus</taxon>
    </lineage>
</organism>
<reference key="1">
    <citation type="journal article" date="1995" name="Science">
        <title>Whole-genome random sequencing and assembly of Haemophilus influenzae Rd.</title>
        <authorList>
            <person name="Fleischmann R.D."/>
            <person name="Adams M.D."/>
            <person name="White O."/>
            <person name="Clayton R.A."/>
            <person name="Kirkness E.F."/>
            <person name="Kerlavage A.R."/>
            <person name="Bult C.J."/>
            <person name="Tomb J.-F."/>
            <person name="Dougherty B.A."/>
            <person name="Merrick J.M."/>
            <person name="McKenney K."/>
            <person name="Sutton G.G."/>
            <person name="FitzHugh W."/>
            <person name="Fields C.A."/>
            <person name="Gocayne J.D."/>
            <person name="Scott J.D."/>
            <person name="Shirley R."/>
            <person name="Liu L.-I."/>
            <person name="Glodek A."/>
            <person name="Kelley J.M."/>
            <person name="Weidman J.F."/>
            <person name="Phillips C.A."/>
            <person name="Spriggs T."/>
            <person name="Hedblom E."/>
            <person name="Cotton M.D."/>
            <person name="Utterback T.R."/>
            <person name="Hanna M.C."/>
            <person name="Nguyen D.T."/>
            <person name="Saudek D.M."/>
            <person name="Brandon R.C."/>
            <person name="Fine L.D."/>
            <person name="Fritchman J.L."/>
            <person name="Fuhrmann J.L."/>
            <person name="Geoghagen N.S.M."/>
            <person name="Gnehm C.L."/>
            <person name="McDonald L.A."/>
            <person name="Small K.V."/>
            <person name="Fraser C.M."/>
            <person name="Smith H.O."/>
            <person name="Venter J.C."/>
        </authorList>
    </citation>
    <scope>NUCLEOTIDE SEQUENCE [LARGE SCALE GENOMIC DNA]</scope>
    <source>
        <strain>ATCC 51907 / DSM 11121 / KW20 / Rd</strain>
    </source>
</reference>
<sequence length="230" mass="25192">MTSKIIVALDFEKEAEALALVDQIDPSLCRLKVGKEMFTTLGINFVKQLHQRNFDVFLDLKYHDIPNTVARAVRSAADLGVWMVDLHASGGLRMMEDAKKILEPYGKDAPLLIAVTVLTSMEDLDLLQIGINASPMEQVLRLAHLTQRAGLDGVVCSPQEVEILRNACGEDFKLVTPGIRPIGTDFGDQRRVMTPTAAIRAGSDYLVIGRPITQADNPAEVLRSINVSIG</sequence>
<gene>
    <name evidence="1" type="primary">pyrF</name>
    <name type="ordered locus">HI_1224</name>
</gene>
<comment type="function">
    <text evidence="1">Catalyzes the decarboxylation of orotidine 5'-monophosphate (OMP) to uridine 5'-monophosphate (UMP).</text>
</comment>
<comment type="catalytic activity">
    <reaction evidence="1">
        <text>orotidine 5'-phosphate + H(+) = UMP + CO2</text>
        <dbReference type="Rhea" id="RHEA:11596"/>
        <dbReference type="ChEBI" id="CHEBI:15378"/>
        <dbReference type="ChEBI" id="CHEBI:16526"/>
        <dbReference type="ChEBI" id="CHEBI:57538"/>
        <dbReference type="ChEBI" id="CHEBI:57865"/>
        <dbReference type="EC" id="4.1.1.23"/>
    </reaction>
</comment>
<comment type="pathway">
    <text evidence="1">Pyrimidine metabolism; UMP biosynthesis via de novo pathway; UMP from orotate: step 2/2.</text>
</comment>
<comment type="subunit">
    <text evidence="1">Homodimer.</text>
</comment>
<comment type="similarity">
    <text evidence="1">Belongs to the OMP decarboxylase family. Type 1 subfamily.</text>
</comment>
<keyword id="KW-0210">Decarboxylase</keyword>
<keyword id="KW-0456">Lyase</keyword>
<keyword id="KW-0665">Pyrimidine biosynthesis</keyword>
<keyword id="KW-1185">Reference proteome</keyword>
<dbReference type="EC" id="4.1.1.23" evidence="1"/>
<dbReference type="EMBL" id="L42023">
    <property type="protein sequence ID" value="AAC22877.1"/>
    <property type="molecule type" value="Genomic_DNA"/>
</dbReference>
<dbReference type="PIR" id="B64111">
    <property type="entry name" value="B64111"/>
</dbReference>
<dbReference type="RefSeq" id="NP_439380.1">
    <property type="nucleotide sequence ID" value="NC_000907.1"/>
</dbReference>
<dbReference type="SMR" id="P43812"/>
<dbReference type="STRING" id="71421.HI_1224"/>
<dbReference type="EnsemblBacteria" id="AAC22877">
    <property type="protein sequence ID" value="AAC22877"/>
    <property type="gene ID" value="HI_1224"/>
</dbReference>
<dbReference type="KEGG" id="hin:HI_1224"/>
<dbReference type="PATRIC" id="fig|71421.8.peg.1276"/>
<dbReference type="eggNOG" id="COG0284">
    <property type="taxonomic scope" value="Bacteria"/>
</dbReference>
<dbReference type="HOGENOM" id="CLU_067069_0_0_6"/>
<dbReference type="OrthoDB" id="9806203at2"/>
<dbReference type="PhylomeDB" id="P43812"/>
<dbReference type="BioCyc" id="HINF71421:G1GJ1-1255-MONOMER"/>
<dbReference type="UniPathway" id="UPA00070">
    <property type="reaction ID" value="UER00120"/>
</dbReference>
<dbReference type="Proteomes" id="UP000000579">
    <property type="component" value="Chromosome"/>
</dbReference>
<dbReference type="GO" id="GO:0005829">
    <property type="term" value="C:cytosol"/>
    <property type="evidence" value="ECO:0000318"/>
    <property type="project" value="GO_Central"/>
</dbReference>
<dbReference type="GO" id="GO:0004590">
    <property type="term" value="F:orotidine-5'-phosphate decarboxylase activity"/>
    <property type="evidence" value="ECO:0000318"/>
    <property type="project" value="GO_Central"/>
</dbReference>
<dbReference type="GO" id="GO:0006207">
    <property type="term" value="P:'de novo' pyrimidine nucleobase biosynthetic process"/>
    <property type="evidence" value="ECO:0000318"/>
    <property type="project" value="GO_Central"/>
</dbReference>
<dbReference type="GO" id="GO:0044205">
    <property type="term" value="P:'de novo' UMP biosynthetic process"/>
    <property type="evidence" value="ECO:0007669"/>
    <property type="project" value="UniProtKB-UniRule"/>
</dbReference>
<dbReference type="CDD" id="cd04725">
    <property type="entry name" value="OMP_decarboxylase_like"/>
    <property type="match status" value="1"/>
</dbReference>
<dbReference type="FunFam" id="3.20.20.70:FF:000015">
    <property type="entry name" value="Orotidine 5'-phosphate decarboxylase"/>
    <property type="match status" value="1"/>
</dbReference>
<dbReference type="Gene3D" id="3.20.20.70">
    <property type="entry name" value="Aldolase class I"/>
    <property type="match status" value="1"/>
</dbReference>
<dbReference type="HAMAP" id="MF_01200_B">
    <property type="entry name" value="OMPdecase_type1_B"/>
    <property type="match status" value="1"/>
</dbReference>
<dbReference type="InterPro" id="IPR013785">
    <property type="entry name" value="Aldolase_TIM"/>
</dbReference>
<dbReference type="InterPro" id="IPR014732">
    <property type="entry name" value="OMPdecase"/>
</dbReference>
<dbReference type="InterPro" id="IPR018089">
    <property type="entry name" value="OMPdecase_AS"/>
</dbReference>
<dbReference type="InterPro" id="IPR047596">
    <property type="entry name" value="OMPdecase_bac"/>
</dbReference>
<dbReference type="InterPro" id="IPR001754">
    <property type="entry name" value="OMPdeCOase_dom"/>
</dbReference>
<dbReference type="InterPro" id="IPR011060">
    <property type="entry name" value="RibuloseP-bd_barrel"/>
</dbReference>
<dbReference type="NCBIfam" id="NF001273">
    <property type="entry name" value="PRK00230.1"/>
    <property type="match status" value="1"/>
</dbReference>
<dbReference type="NCBIfam" id="TIGR01740">
    <property type="entry name" value="pyrF"/>
    <property type="match status" value="1"/>
</dbReference>
<dbReference type="PANTHER" id="PTHR32119">
    <property type="entry name" value="OROTIDINE 5'-PHOSPHATE DECARBOXYLASE"/>
    <property type="match status" value="1"/>
</dbReference>
<dbReference type="PANTHER" id="PTHR32119:SF2">
    <property type="entry name" value="OROTIDINE 5'-PHOSPHATE DECARBOXYLASE"/>
    <property type="match status" value="1"/>
</dbReference>
<dbReference type="Pfam" id="PF00215">
    <property type="entry name" value="OMPdecase"/>
    <property type="match status" value="1"/>
</dbReference>
<dbReference type="SMART" id="SM00934">
    <property type="entry name" value="OMPdecase"/>
    <property type="match status" value="1"/>
</dbReference>
<dbReference type="SUPFAM" id="SSF51366">
    <property type="entry name" value="Ribulose-phoshate binding barrel"/>
    <property type="match status" value="1"/>
</dbReference>
<dbReference type="PROSITE" id="PS00156">
    <property type="entry name" value="OMPDECASE"/>
    <property type="match status" value="1"/>
</dbReference>
<protein>
    <recommendedName>
        <fullName evidence="1">Orotidine 5'-phosphate decarboxylase</fullName>
        <ecNumber evidence="1">4.1.1.23</ecNumber>
    </recommendedName>
    <alternativeName>
        <fullName evidence="1">OMP decarboxylase</fullName>
        <shortName evidence="1">OMPDCase</shortName>
        <shortName evidence="1">OMPdecase</shortName>
    </alternativeName>
</protein>
<proteinExistence type="inferred from homology"/>
<evidence type="ECO:0000255" key="1">
    <source>
        <dbReference type="HAMAP-Rule" id="MF_01200"/>
    </source>
</evidence>
<feature type="chain" id="PRO_0000134546" description="Orotidine 5'-phosphate decarboxylase">
    <location>
        <begin position="1"/>
        <end position="230"/>
    </location>
</feature>
<feature type="active site" description="Proton donor" evidence="1">
    <location>
        <position position="61"/>
    </location>
</feature>
<feature type="binding site" evidence="1">
    <location>
        <position position="10"/>
    </location>
    <ligand>
        <name>substrate</name>
    </ligand>
</feature>
<feature type="binding site" evidence="1">
    <location>
        <position position="32"/>
    </location>
    <ligand>
        <name>substrate</name>
    </ligand>
</feature>
<feature type="binding site" evidence="1">
    <location>
        <begin position="59"/>
        <end position="68"/>
    </location>
    <ligand>
        <name>substrate</name>
    </ligand>
</feature>
<feature type="binding site" evidence="1">
    <location>
        <position position="119"/>
    </location>
    <ligand>
        <name>substrate</name>
    </ligand>
</feature>
<feature type="binding site" evidence="1">
    <location>
        <position position="180"/>
    </location>
    <ligand>
        <name>substrate</name>
    </ligand>
</feature>
<feature type="binding site" evidence="1">
    <location>
        <position position="189"/>
    </location>
    <ligand>
        <name>substrate</name>
    </ligand>
</feature>
<feature type="binding site" evidence="1">
    <location>
        <position position="209"/>
    </location>
    <ligand>
        <name>substrate</name>
    </ligand>
</feature>
<feature type="binding site" evidence="1">
    <location>
        <position position="210"/>
    </location>
    <ligand>
        <name>substrate</name>
    </ligand>
</feature>